<reference key="1">
    <citation type="journal article" date="2008" name="J. Bacteriol.">
        <title>The pangenome structure of Escherichia coli: comparative genomic analysis of E. coli commensal and pathogenic isolates.</title>
        <authorList>
            <person name="Rasko D.A."/>
            <person name="Rosovitz M.J."/>
            <person name="Myers G.S.A."/>
            <person name="Mongodin E.F."/>
            <person name="Fricke W.F."/>
            <person name="Gajer P."/>
            <person name="Crabtree J."/>
            <person name="Sebaihia M."/>
            <person name="Thomson N.R."/>
            <person name="Chaudhuri R."/>
            <person name="Henderson I.R."/>
            <person name="Sperandio V."/>
            <person name="Ravel J."/>
        </authorList>
    </citation>
    <scope>NUCLEOTIDE SEQUENCE [LARGE SCALE GENOMIC DNA]</scope>
    <source>
        <strain>HS</strain>
    </source>
</reference>
<feature type="chain" id="PRO_1000068586" description="Malate dehydrogenase">
    <location>
        <begin position="1"/>
        <end position="312"/>
    </location>
</feature>
<feature type="active site" description="Proton acceptor" evidence="1">
    <location>
        <position position="177"/>
    </location>
</feature>
<feature type="binding site" evidence="1">
    <location>
        <begin position="7"/>
        <end position="13"/>
    </location>
    <ligand>
        <name>NAD(+)</name>
        <dbReference type="ChEBI" id="CHEBI:57540"/>
    </ligand>
</feature>
<feature type="binding site" evidence="1">
    <location>
        <position position="34"/>
    </location>
    <ligand>
        <name>NAD(+)</name>
        <dbReference type="ChEBI" id="CHEBI:57540"/>
    </ligand>
</feature>
<feature type="binding site" evidence="1">
    <location>
        <position position="81"/>
    </location>
    <ligand>
        <name>substrate</name>
    </ligand>
</feature>
<feature type="binding site" evidence="1">
    <location>
        <position position="87"/>
    </location>
    <ligand>
        <name>substrate</name>
    </ligand>
</feature>
<feature type="binding site" evidence="1">
    <location>
        <position position="94"/>
    </location>
    <ligand>
        <name>NAD(+)</name>
        <dbReference type="ChEBI" id="CHEBI:57540"/>
    </ligand>
</feature>
<feature type="binding site" evidence="1">
    <location>
        <begin position="117"/>
        <end position="119"/>
    </location>
    <ligand>
        <name>NAD(+)</name>
        <dbReference type="ChEBI" id="CHEBI:57540"/>
    </ligand>
</feature>
<feature type="binding site" evidence="1">
    <location>
        <position position="119"/>
    </location>
    <ligand>
        <name>substrate</name>
    </ligand>
</feature>
<feature type="binding site" evidence="1">
    <location>
        <position position="153"/>
    </location>
    <ligand>
        <name>substrate</name>
    </ligand>
</feature>
<feature type="binding site" evidence="1">
    <location>
        <position position="227"/>
    </location>
    <ligand>
        <name>NAD(+)</name>
        <dbReference type="ChEBI" id="CHEBI:57540"/>
    </ligand>
</feature>
<accession>A8A545</accession>
<gene>
    <name evidence="1" type="primary">mdh</name>
    <name type="ordered locus">EcHS_A3425</name>
</gene>
<proteinExistence type="inferred from homology"/>
<dbReference type="EC" id="1.1.1.37" evidence="1"/>
<dbReference type="EMBL" id="CP000802">
    <property type="protein sequence ID" value="ABV07649.1"/>
    <property type="molecule type" value="Genomic_DNA"/>
</dbReference>
<dbReference type="RefSeq" id="WP_001295272.1">
    <property type="nucleotide sequence ID" value="NC_009800.1"/>
</dbReference>
<dbReference type="SMR" id="A8A545"/>
<dbReference type="GeneID" id="93778749"/>
<dbReference type="KEGG" id="ecx:EcHS_A3425"/>
<dbReference type="HOGENOM" id="CLU_047181_0_1_6"/>
<dbReference type="GO" id="GO:0005737">
    <property type="term" value="C:cytoplasm"/>
    <property type="evidence" value="ECO:0007669"/>
    <property type="project" value="TreeGrafter"/>
</dbReference>
<dbReference type="GO" id="GO:0030060">
    <property type="term" value="F:L-malate dehydrogenase (NAD+) activity"/>
    <property type="evidence" value="ECO:0007669"/>
    <property type="project" value="UniProtKB-UniRule"/>
</dbReference>
<dbReference type="GO" id="GO:0006108">
    <property type="term" value="P:malate metabolic process"/>
    <property type="evidence" value="ECO:0007669"/>
    <property type="project" value="InterPro"/>
</dbReference>
<dbReference type="GO" id="GO:0006099">
    <property type="term" value="P:tricarboxylic acid cycle"/>
    <property type="evidence" value="ECO:0007669"/>
    <property type="project" value="UniProtKB-UniRule"/>
</dbReference>
<dbReference type="CDD" id="cd01337">
    <property type="entry name" value="MDH_glyoxysomal_mitochondrial"/>
    <property type="match status" value="1"/>
</dbReference>
<dbReference type="FunFam" id="3.40.50.720:FF:000017">
    <property type="entry name" value="Malate dehydrogenase"/>
    <property type="match status" value="1"/>
</dbReference>
<dbReference type="FunFam" id="3.90.110.10:FF:000001">
    <property type="entry name" value="Malate dehydrogenase"/>
    <property type="match status" value="1"/>
</dbReference>
<dbReference type="Gene3D" id="3.90.110.10">
    <property type="entry name" value="Lactate dehydrogenase/glycoside hydrolase, family 4, C-terminal"/>
    <property type="match status" value="1"/>
</dbReference>
<dbReference type="Gene3D" id="3.40.50.720">
    <property type="entry name" value="NAD(P)-binding Rossmann-like Domain"/>
    <property type="match status" value="1"/>
</dbReference>
<dbReference type="HAMAP" id="MF_01516">
    <property type="entry name" value="Malate_dehydrog_1"/>
    <property type="match status" value="1"/>
</dbReference>
<dbReference type="InterPro" id="IPR001557">
    <property type="entry name" value="L-lactate/malate_DH"/>
</dbReference>
<dbReference type="InterPro" id="IPR022383">
    <property type="entry name" value="Lactate/malate_DH_C"/>
</dbReference>
<dbReference type="InterPro" id="IPR001236">
    <property type="entry name" value="Lactate/malate_DH_N"/>
</dbReference>
<dbReference type="InterPro" id="IPR015955">
    <property type="entry name" value="Lactate_DH/Glyco_Ohase_4_C"/>
</dbReference>
<dbReference type="InterPro" id="IPR001252">
    <property type="entry name" value="Malate_DH_AS"/>
</dbReference>
<dbReference type="InterPro" id="IPR010097">
    <property type="entry name" value="Malate_DH_type1"/>
</dbReference>
<dbReference type="InterPro" id="IPR023958">
    <property type="entry name" value="Malate_DH_type1_bac"/>
</dbReference>
<dbReference type="InterPro" id="IPR036291">
    <property type="entry name" value="NAD(P)-bd_dom_sf"/>
</dbReference>
<dbReference type="NCBIfam" id="TIGR01772">
    <property type="entry name" value="MDH_euk_gproteo"/>
    <property type="match status" value="1"/>
</dbReference>
<dbReference type="PANTHER" id="PTHR11540">
    <property type="entry name" value="MALATE AND LACTATE DEHYDROGENASE"/>
    <property type="match status" value="1"/>
</dbReference>
<dbReference type="PANTHER" id="PTHR11540:SF16">
    <property type="entry name" value="MALATE DEHYDROGENASE, MITOCHONDRIAL"/>
    <property type="match status" value="1"/>
</dbReference>
<dbReference type="Pfam" id="PF02866">
    <property type="entry name" value="Ldh_1_C"/>
    <property type="match status" value="1"/>
</dbReference>
<dbReference type="Pfam" id="PF00056">
    <property type="entry name" value="Ldh_1_N"/>
    <property type="match status" value="1"/>
</dbReference>
<dbReference type="PIRSF" id="PIRSF000102">
    <property type="entry name" value="Lac_mal_DH"/>
    <property type="match status" value="1"/>
</dbReference>
<dbReference type="SUPFAM" id="SSF56327">
    <property type="entry name" value="LDH C-terminal domain-like"/>
    <property type="match status" value="1"/>
</dbReference>
<dbReference type="SUPFAM" id="SSF51735">
    <property type="entry name" value="NAD(P)-binding Rossmann-fold domains"/>
    <property type="match status" value="1"/>
</dbReference>
<dbReference type="PROSITE" id="PS00068">
    <property type="entry name" value="MDH"/>
    <property type="match status" value="1"/>
</dbReference>
<sequence>MKVAVLGAAGGIGQALALLLKTQLPSGSELSLYDIAPVTPGVAVDLSHIPTAVKIKGFSGEDATPALEGADVVLISAGVARKPGMDRSDLFNVNAGIVKNLVQQVAKTCPKACIGIITNPVNTTVAIAAEVLKKAGVYDKNKLFGVTTLDIIRSNTFVAELKGKQPGEVEVPVIGGHSGVTILPLLSQVPGVSFTEQEVADLTKRIQNAGTEVVEAKAGGGSATLSMGQAAARFGLSLVRALQGEQGVVECAYVEGDGQYARFFSQPLLLGKNGVEERKSIGTLSAFEQNALEGMLDTLKKDIALGEEFVNK</sequence>
<keyword id="KW-0520">NAD</keyword>
<keyword id="KW-0560">Oxidoreductase</keyword>
<keyword id="KW-0816">Tricarboxylic acid cycle</keyword>
<organism>
    <name type="scientific">Escherichia coli O9:H4 (strain HS)</name>
    <dbReference type="NCBI Taxonomy" id="331112"/>
    <lineage>
        <taxon>Bacteria</taxon>
        <taxon>Pseudomonadati</taxon>
        <taxon>Pseudomonadota</taxon>
        <taxon>Gammaproteobacteria</taxon>
        <taxon>Enterobacterales</taxon>
        <taxon>Enterobacteriaceae</taxon>
        <taxon>Escherichia</taxon>
    </lineage>
</organism>
<protein>
    <recommendedName>
        <fullName evidence="1">Malate dehydrogenase</fullName>
        <ecNumber evidence="1">1.1.1.37</ecNumber>
    </recommendedName>
</protein>
<comment type="function">
    <text evidence="1">Catalyzes the reversible oxidation of malate to oxaloacetate.</text>
</comment>
<comment type="catalytic activity">
    <reaction evidence="1">
        <text>(S)-malate + NAD(+) = oxaloacetate + NADH + H(+)</text>
        <dbReference type="Rhea" id="RHEA:21432"/>
        <dbReference type="ChEBI" id="CHEBI:15378"/>
        <dbReference type="ChEBI" id="CHEBI:15589"/>
        <dbReference type="ChEBI" id="CHEBI:16452"/>
        <dbReference type="ChEBI" id="CHEBI:57540"/>
        <dbReference type="ChEBI" id="CHEBI:57945"/>
        <dbReference type="EC" id="1.1.1.37"/>
    </reaction>
</comment>
<comment type="subunit">
    <text evidence="1">Homodimer.</text>
</comment>
<comment type="similarity">
    <text evidence="1">Belongs to the LDH/MDH superfamily. MDH type 1 family.</text>
</comment>
<name>MDH_ECOHS</name>
<evidence type="ECO:0000255" key="1">
    <source>
        <dbReference type="HAMAP-Rule" id="MF_01516"/>
    </source>
</evidence>